<name>RL15_RALPJ</name>
<reference key="1">
    <citation type="submission" date="2008-05" db="EMBL/GenBank/DDBJ databases">
        <title>Complete sequence of chromosome 1 of Ralstonia pickettii 12J.</title>
        <authorList>
            <person name="Lucas S."/>
            <person name="Copeland A."/>
            <person name="Lapidus A."/>
            <person name="Glavina del Rio T."/>
            <person name="Dalin E."/>
            <person name="Tice H."/>
            <person name="Bruce D."/>
            <person name="Goodwin L."/>
            <person name="Pitluck S."/>
            <person name="Meincke L."/>
            <person name="Brettin T."/>
            <person name="Detter J.C."/>
            <person name="Han C."/>
            <person name="Kuske C.R."/>
            <person name="Schmutz J."/>
            <person name="Larimer F."/>
            <person name="Land M."/>
            <person name="Hauser L."/>
            <person name="Kyrpides N."/>
            <person name="Mikhailova N."/>
            <person name="Marsh T."/>
            <person name="Richardson P."/>
        </authorList>
    </citation>
    <scope>NUCLEOTIDE SEQUENCE [LARGE SCALE GENOMIC DNA]</scope>
    <source>
        <strain>12J</strain>
    </source>
</reference>
<sequence length="143" mass="14749">MQLNNLKPAAGSKHAKRRVGRGIGSGLGKTAGRGHKGQKSRSGGFHKVGFEGGQMPLHRRLPKRGFTSLTKEFTAEVRLGDLAGLPIEEVDLLSLKQAGLVGEMVKSAKVILSGEIDKKVTLKGIGATAGAKAAIEAAGGSLA</sequence>
<feature type="chain" id="PRO_1000142867" description="Large ribosomal subunit protein uL15">
    <location>
        <begin position="1"/>
        <end position="143"/>
    </location>
</feature>
<feature type="region of interest" description="Disordered" evidence="2">
    <location>
        <begin position="1"/>
        <end position="57"/>
    </location>
</feature>
<feature type="compositionally biased region" description="Gly residues" evidence="2">
    <location>
        <begin position="21"/>
        <end position="31"/>
    </location>
</feature>
<comment type="function">
    <text evidence="1">Binds to the 23S rRNA.</text>
</comment>
<comment type="subunit">
    <text evidence="1">Part of the 50S ribosomal subunit.</text>
</comment>
<comment type="similarity">
    <text evidence="1">Belongs to the universal ribosomal protein uL15 family.</text>
</comment>
<keyword id="KW-0687">Ribonucleoprotein</keyword>
<keyword id="KW-0689">Ribosomal protein</keyword>
<keyword id="KW-0694">RNA-binding</keyword>
<keyword id="KW-0699">rRNA-binding</keyword>
<dbReference type="EMBL" id="CP001068">
    <property type="protein sequence ID" value="ACD28400.1"/>
    <property type="molecule type" value="Genomic_DNA"/>
</dbReference>
<dbReference type="SMR" id="B2UEK0"/>
<dbReference type="STRING" id="402626.Rpic_3278"/>
<dbReference type="KEGG" id="rpi:Rpic_3278"/>
<dbReference type="eggNOG" id="COG0200">
    <property type="taxonomic scope" value="Bacteria"/>
</dbReference>
<dbReference type="HOGENOM" id="CLU_055188_4_2_4"/>
<dbReference type="GO" id="GO:0022625">
    <property type="term" value="C:cytosolic large ribosomal subunit"/>
    <property type="evidence" value="ECO:0007669"/>
    <property type="project" value="TreeGrafter"/>
</dbReference>
<dbReference type="GO" id="GO:0019843">
    <property type="term" value="F:rRNA binding"/>
    <property type="evidence" value="ECO:0007669"/>
    <property type="project" value="UniProtKB-UniRule"/>
</dbReference>
<dbReference type="GO" id="GO:0003735">
    <property type="term" value="F:structural constituent of ribosome"/>
    <property type="evidence" value="ECO:0007669"/>
    <property type="project" value="InterPro"/>
</dbReference>
<dbReference type="GO" id="GO:0006412">
    <property type="term" value="P:translation"/>
    <property type="evidence" value="ECO:0007669"/>
    <property type="project" value="UniProtKB-UniRule"/>
</dbReference>
<dbReference type="Gene3D" id="3.100.10.10">
    <property type="match status" value="1"/>
</dbReference>
<dbReference type="HAMAP" id="MF_01341">
    <property type="entry name" value="Ribosomal_uL15"/>
    <property type="match status" value="1"/>
</dbReference>
<dbReference type="InterPro" id="IPR030878">
    <property type="entry name" value="Ribosomal_uL15"/>
</dbReference>
<dbReference type="InterPro" id="IPR021131">
    <property type="entry name" value="Ribosomal_uL15/eL18"/>
</dbReference>
<dbReference type="InterPro" id="IPR036227">
    <property type="entry name" value="Ribosomal_uL15/eL18_sf"/>
</dbReference>
<dbReference type="InterPro" id="IPR005749">
    <property type="entry name" value="Ribosomal_uL15_bac-type"/>
</dbReference>
<dbReference type="InterPro" id="IPR001196">
    <property type="entry name" value="Ribosomal_uL15_CS"/>
</dbReference>
<dbReference type="NCBIfam" id="TIGR01071">
    <property type="entry name" value="rplO_bact"/>
    <property type="match status" value="1"/>
</dbReference>
<dbReference type="PANTHER" id="PTHR12934">
    <property type="entry name" value="50S RIBOSOMAL PROTEIN L15"/>
    <property type="match status" value="1"/>
</dbReference>
<dbReference type="PANTHER" id="PTHR12934:SF11">
    <property type="entry name" value="LARGE RIBOSOMAL SUBUNIT PROTEIN UL15M"/>
    <property type="match status" value="1"/>
</dbReference>
<dbReference type="Pfam" id="PF00828">
    <property type="entry name" value="Ribosomal_L27A"/>
    <property type="match status" value="1"/>
</dbReference>
<dbReference type="SUPFAM" id="SSF52080">
    <property type="entry name" value="Ribosomal proteins L15p and L18e"/>
    <property type="match status" value="1"/>
</dbReference>
<dbReference type="PROSITE" id="PS00475">
    <property type="entry name" value="RIBOSOMAL_L15"/>
    <property type="match status" value="1"/>
</dbReference>
<organism>
    <name type="scientific">Ralstonia pickettii (strain 12J)</name>
    <dbReference type="NCBI Taxonomy" id="402626"/>
    <lineage>
        <taxon>Bacteria</taxon>
        <taxon>Pseudomonadati</taxon>
        <taxon>Pseudomonadota</taxon>
        <taxon>Betaproteobacteria</taxon>
        <taxon>Burkholderiales</taxon>
        <taxon>Burkholderiaceae</taxon>
        <taxon>Ralstonia</taxon>
    </lineage>
</organism>
<evidence type="ECO:0000255" key="1">
    <source>
        <dbReference type="HAMAP-Rule" id="MF_01341"/>
    </source>
</evidence>
<evidence type="ECO:0000256" key="2">
    <source>
        <dbReference type="SAM" id="MobiDB-lite"/>
    </source>
</evidence>
<evidence type="ECO:0000305" key="3"/>
<gene>
    <name evidence="1" type="primary">rplO</name>
    <name type="ordered locus">Rpic_3278</name>
</gene>
<protein>
    <recommendedName>
        <fullName evidence="1">Large ribosomal subunit protein uL15</fullName>
    </recommendedName>
    <alternativeName>
        <fullName evidence="3">50S ribosomal protein L15</fullName>
    </alternativeName>
</protein>
<proteinExistence type="inferred from homology"/>
<accession>B2UEK0</accession>